<evidence type="ECO:0000250" key="1"/>
<evidence type="ECO:0000250" key="2">
    <source>
        <dbReference type="UniProtKB" id="P18893"/>
    </source>
</evidence>
<evidence type="ECO:0000250" key="3">
    <source>
        <dbReference type="UniProtKB" id="P22301"/>
    </source>
</evidence>
<evidence type="ECO:0000255" key="4"/>
<evidence type="ECO:0000305" key="5"/>
<gene>
    <name type="primary">IL10</name>
</gene>
<reference key="1">
    <citation type="journal article" date="1995" name="J. Immunol.">
        <title>Comparative sequence analysis of cytokine genes from human and nonhuman primates.</title>
        <authorList>
            <person name="Villinger F.J."/>
            <person name="Brar S.S."/>
            <person name="Mayne A.E."/>
            <person name="Chikkala N."/>
            <person name="Ansari A.A."/>
        </authorList>
    </citation>
    <scope>NUCLEOTIDE SEQUENCE [MRNA]</scope>
    <source>
        <strain>RTC 2</strain>
    </source>
</reference>
<keyword id="KW-0202">Cytokine</keyword>
<keyword id="KW-1015">Disulfide bond</keyword>
<keyword id="KW-0325">Glycoprotein</keyword>
<keyword id="KW-1185">Reference proteome</keyword>
<keyword id="KW-0964">Secreted</keyword>
<keyword id="KW-0732">Signal</keyword>
<protein>
    <recommendedName>
        <fullName>Interleukin-10</fullName>
        <shortName>IL-10</shortName>
    </recommendedName>
    <alternativeName>
        <fullName>Cytokine synthesis inhibitory factor</fullName>
        <shortName>CSIF</shortName>
    </alternativeName>
</protein>
<proteinExistence type="evidence at transcript level"/>
<comment type="function">
    <text evidence="2 3">Major immune regulatory cytokine that acts on many cells of the immune system where it has profound anti-inflammatory functions, limiting excessive tissue disruption caused by inflammation. Mechanistically, IL10 binds to its heterotetrameric receptor comprising IL10RA and IL10RB leading to JAK1 and STAT2-mediated phosphorylation of STAT3. In turn, STAT3 translocates to the nucleus where it drives expression of anti-inflammatory mediators. Targets antigen-presenting cells (APCs) such as macrophages and monocytes and inhibits their release of pro-inflammatory cytokines including granulocyte-macrophage colony-stimulating factor /GM-CSF, granulocyte colony-stimulating factor/G-CSF, IL-1 alpha, IL-1 beta, IL-6, IL-8 and TNF-alpha. Also interferes with antigen presentation by reducing the expression of MHC-class II and co-stimulatory molecules, thereby inhibiting their ability to induce T cell activation (By similarity). In addition, controls the inflammatory response of macrophages by reprogramming essential metabolic pathways including mTOR signaling (By similarity).</text>
</comment>
<comment type="subunit">
    <text evidence="3">Homodimer. Interacts with IL10RA and IL10RB.</text>
</comment>
<comment type="subcellular location">
    <subcellularLocation>
        <location evidence="3">Secreted</location>
    </subcellularLocation>
</comment>
<comment type="similarity">
    <text evidence="5">Belongs to the IL-10 family.</text>
</comment>
<sequence length="178" mass="20557">MHSSALLCCLVLLTGVRASPGQGTQSENSCTRFPGNLPHMLRDLRDAFSRVKTFFQMKDQLDNILLKESLLEDFKGYLGCQALSEMIQFYLEEVMPQAENHDPDIKEHVNSLGENLKTLRLRLRRCHRFLPCENKSKAVEQVKNAFSKLQEKGVYKAMSEFDIFINYIEAYMTMKIQN</sequence>
<accession>P51496</accession>
<dbReference type="EMBL" id="L26029">
    <property type="protein sequence ID" value="AAA99975.1"/>
    <property type="molecule type" value="mRNA"/>
</dbReference>
<dbReference type="RefSeq" id="NP_001038192.1">
    <property type="nucleotide sequence ID" value="NM_001044727.1"/>
</dbReference>
<dbReference type="SMR" id="P51496"/>
<dbReference type="FunCoup" id="P51496">
    <property type="interactions" value="868"/>
</dbReference>
<dbReference type="STRING" id="9544.ENSMMUP00000031022"/>
<dbReference type="GlyCosmos" id="P51496">
    <property type="glycosylation" value="1 site, No reported glycans"/>
</dbReference>
<dbReference type="PaxDb" id="9544-ENSMMUP00000031022"/>
<dbReference type="Ensembl" id="ENSMMUT00000033151.4">
    <property type="protein sequence ID" value="ENSMMUP00000031022.2"/>
    <property type="gene ID" value="ENSMMUG00000023569.4"/>
</dbReference>
<dbReference type="GeneID" id="694931"/>
<dbReference type="KEGG" id="mcc:694931"/>
<dbReference type="CTD" id="3586"/>
<dbReference type="VEuPathDB" id="HostDB:ENSMMUG00000023569"/>
<dbReference type="VGNC" id="VGNC:99978">
    <property type="gene designation" value="IL10"/>
</dbReference>
<dbReference type="eggNOG" id="ENOG502S22U">
    <property type="taxonomic scope" value="Eukaryota"/>
</dbReference>
<dbReference type="GeneTree" id="ENSGT00950000183124"/>
<dbReference type="HOGENOM" id="CLU_127747_0_0_1"/>
<dbReference type="InParanoid" id="P51496"/>
<dbReference type="OMA" id="CHRFFTC"/>
<dbReference type="OrthoDB" id="9931894at2759"/>
<dbReference type="TreeFam" id="TF333253"/>
<dbReference type="Proteomes" id="UP000006718">
    <property type="component" value="Chromosome 1"/>
</dbReference>
<dbReference type="Bgee" id="ENSMMUG00000023569">
    <property type="expression patterns" value="Expressed in adipose tissue and 9 other cell types or tissues"/>
</dbReference>
<dbReference type="ExpressionAtlas" id="P51496">
    <property type="expression patterns" value="baseline"/>
</dbReference>
<dbReference type="GO" id="GO:0005615">
    <property type="term" value="C:extracellular space"/>
    <property type="evidence" value="ECO:0000250"/>
    <property type="project" value="UniProtKB"/>
</dbReference>
<dbReference type="GO" id="GO:0005125">
    <property type="term" value="F:cytokine activity"/>
    <property type="evidence" value="ECO:0000318"/>
    <property type="project" value="GO_Central"/>
</dbReference>
<dbReference type="GO" id="GO:0046983">
    <property type="term" value="F:protein dimerization activity"/>
    <property type="evidence" value="ECO:0007669"/>
    <property type="project" value="Ensembl"/>
</dbReference>
<dbReference type="GO" id="GO:0060670">
    <property type="term" value="P:branching involved in labyrinthine layer morphogenesis"/>
    <property type="evidence" value="ECO:0007669"/>
    <property type="project" value="Ensembl"/>
</dbReference>
<dbReference type="GO" id="GO:0035729">
    <property type="term" value="P:cellular response to hepatocyte growth factor stimulus"/>
    <property type="evidence" value="ECO:0007669"/>
    <property type="project" value="Ensembl"/>
</dbReference>
<dbReference type="GO" id="GO:0071222">
    <property type="term" value="P:cellular response to lipopolysaccharide"/>
    <property type="evidence" value="ECO:0007669"/>
    <property type="project" value="Ensembl"/>
</dbReference>
<dbReference type="GO" id="GO:0002439">
    <property type="term" value="P:chronic inflammatory response to antigenic stimulus"/>
    <property type="evidence" value="ECO:0007669"/>
    <property type="project" value="Ensembl"/>
</dbReference>
<dbReference type="GO" id="GO:0042742">
    <property type="term" value="P:defense response to bacterium"/>
    <property type="evidence" value="ECO:0007669"/>
    <property type="project" value="Ensembl"/>
</dbReference>
<dbReference type="GO" id="GO:0042832">
    <property type="term" value="P:defense response to protozoan"/>
    <property type="evidence" value="ECO:0007669"/>
    <property type="project" value="Ensembl"/>
</dbReference>
<dbReference type="GO" id="GO:0006955">
    <property type="term" value="P:immune response"/>
    <property type="evidence" value="ECO:0000318"/>
    <property type="project" value="GO_Central"/>
</dbReference>
<dbReference type="GO" id="GO:0140105">
    <property type="term" value="P:interleukin-10-mediated signaling pathway"/>
    <property type="evidence" value="ECO:0000318"/>
    <property type="project" value="GO_Central"/>
</dbReference>
<dbReference type="GO" id="GO:0010507">
    <property type="term" value="P:negative regulation of autophagy"/>
    <property type="evidence" value="ECO:0007669"/>
    <property type="project" value="Ensembl"/>
</dbReference>
<dbReference type="GO" id="GO:0030889">
    <property type="term" value="P:negative regulation of B cell proliferation"/>
    <property type="evidence" value="ECO:0000250"/>
    <property type="project" value="UniProtKB"/>
</dbReference>
<dbReference type="GO" id="GO:0002875">
    <property type="term" value="P:negative regulation of chronic inflammatory response to antigenic stimulus"/>
    <property type="evidence" value="ECO:0007669"/>
    <property type="project" value="Ensembl"/>
</dbReference>
<dbReference type="GO" id="GO:0002719">
    <property type="term" value="P:negative regulation of cytokine production involved in immune response"/>
    <property type="evidence" value="ECO:0000250"/>
    <property type="project" value="UniProtKB"/>
</dbReference>
<dbReference type="GO" id="GO:2000352">
    <property type="term" value="P:negative regulation of endothelial cell apoptotic process"/>
    <property type="evidence" value="ECO:0007669"/>
    <property type="project" value="Ensembl"/>
</dbReference>
<dbReference type="GO" id="GO:0034115">
    <property type="term" value="P:negative regulation of heterotypic cell-cell adhesion"/>
    <property type="evidence" value="ECO:0007669"/>
    <property type="project" value="Ensembl"/>
</dbReference>
<dbReference type="GO" id="GO:0050728">
    <property type="term" value="P:negative regulation of inflammatory response"/>
    <property type="evidence" value="ECO:0000250"/>
    <property type="project" value="UniProtKB"/>
</dbReference>
<dbReference type="GO" id="GO:0032695">
    <property type="term" value="P:negative regulation of interleukin-12 production"/>
    <property type="evidence" value="ECO:0007669"/>
    <property type="project" value="Ensembl"/>
</dbReference>
<dbReference type="GO" id="GO:0032715">
    <property type="term" value="P:negative regulation of interleukin-6 production"/>
    <property type="evidence" value="ECO:0000250"/>
    <property type="project" value="UniProtKB"/>
</dbReference>
<dbReference type="GO" id="GO:0051045">
    <property type="term" value="P:negative regulation of membrane protein ectodomain proteolysis"/>
    <property type="evidence" value="ECO:0000250"/>
    <property type="project" value="UniProtKB"/>
</dbReference>
<dbReference type="GO" id="GO:0045347">
    <property type="term" value="P:negative regulation of MHC class II biosynthetic process"/>
    <property type="evidence" value="ECO:0007669"/>
    <property type="project" value="Ensembl"/>
</dbReference>
<dbReference type="GO" id="GO:0030886">
    <property type="term" value="P:negative regulation of myeloid dendritic cell activation"/>
    <property type="evidence" value="ECO:0007669"/>
    <property type="project" value="Ensembl"/>
</dbReference>
<dbReference type="GO" id="GO:1903377">
    <property type="term" value="P:negative regulation of oxidative stress-induced neuron intrinsic apoptotic signaling pathway"/>
    <property type="evidence" value="ECO:0007669"/>
    <property type="project" value="Ensembl"/>
</dbReference>
<dbReference type="GO" id="GO:0032720">
    <property type="term" value="P:negative regulation of tumor necrosis factor production"/>
    <property type="evidence" value="ECO:0007669"/>
    <property type="project" value="Ensembl"/>
</dbReference>
<dbReference type="GO" id="GO:0032689">
    <property type="term" value="P:negative regulation of type II interferon production"/>
    <property type="evidence" value="ECO:0007669"/>
    <property type="project" value="Ensembl"/>
</dbReference>
<dbReference type="GO" id="GO:1904706">
    <property type="term" value="P:negative regulation of vascular associated smooth muscle cell proliferation"/>
    <property type="evidence" value="ECO:0007669"/>
    <property type="project" value="Ensembl"/>
</dbReference>
<dbReference type="GO" id="GO:0002904">
    <property type="term" value="P:positive regulation of B cell apoptotic process"/>
    <property type="evidence" value="ECO:0000250"/>
    <property type="project" value="UniProtKB"/>
</dbReference>
<dbReference type="GO" id="GO:0045787">
    <property type="term" value="P:positive regulation of cell cycle"/>
    <property type="evidence" value="ECO:0007669"/>
    <property type="project" value="Ensembl"/>
</dbReference>
<dbReference type="GO" id="GO:0001819">
    <property type="term" value="P:positive regulation of cytokine production"/>
    <property type="evidence" value="ECO:0000250"/>
    <property type="project" value="UniProtKB"/>
</dbReference>
<dbReference type="GO" id="GO:0051091">
    <property type="term" value="P:positive regulation of DNA-binding transcription factor activity"/>
    <property type="evidence" value="ECO:0000250"/>
    <property type="project" value="UniProtKB"/>
</dbReference>
<dbReference type="GO" id="GO:0045893">
    <property type="term" value="P:positive regulation of DNA-templated transcription"/>
    <property type="evidence" value="ECO:0000250"/>
    <property type="project" value="UniProtKB"/>
</dbReference>
<dbReference type="GO" id="GO:0001938">
    <property type="term" value="P:positive regulation of endothelial cell proliferation"/>
    <property type="evidence" value="ECO:0007669"/>
    <property type="project" value="Ensembl"/>
</dbReference>
<dbReference type="GO" id="GO:0002639">
    <property type="term" value="P:positive regulation of immunoglobulin production"/>
    <property type="evidence" value="ECO:0007669"/>
    <property type="project" value="Ensembl"/>
</dbReference>
<dbReference type="GO" id="GO:0045348">
    <property type="term" value="P:positive regulation of MHC class II biosynthetic process"/>
    <property type="evidence" value="ECO:0007669"/>
    <property type="project" value="Ensembl"/>
</dbReference>
<dbReference type="GO" id="GO:1902895">
    <property type="term" value="P:positive regulation of miRNA transcription"/>
    <property type="evidence" value="ECO:0007669"/>
    <property type="project" value="Ensembl"/>
</dbReference>
<dbReference type="GO" id="GO:1900100">
    <property type="term" value="P:positive regulation of plasma cell differentiation"/>
    <property type="evidence" value="ECO:0007669"/>
    <property type="project" value="Ensembl"/>
</dbReference>
<dbReference type="GO" id="GO:0046427">
    <property type="term" value="P:positive regulation of receptor signaling pathway via JAK-STAT"/>
    <property type="evidence" value="ECO:0000318"/>
    <property type="project" value="GO_Central"/>
</dbReference>
<dbReference type="GO" id="GO:1903672">
    <property type="term" value="P:positive regulation of sprouting angiogenesis"/>
    <property type="evidence" value="ECO:0007669"/>
    <property type="project" value="Ensembl"/>
</dbReference>
<dbReference type="GO" id="GO:0045944">
    <property type="term" value="P:positive regulation of transcription by RNA polymerase II"/>
    <property type="evidence" value="ECO:0007669"/>
    <property type="project" value="Ensembl"/>
</dbReference>
<dbReference type="GO" id="GO:1903034">
    <property type="term" value="P:regulation of response to wounding"/>
    <property type="evidence" value="ECO:0007669"/>
    <property type="project" value="Ensembl"/>
</dbReference>
<dbReference type="GO" id="GO:0051384">
    <property type="term" value="P:response to glucocorticoid"/>
    <property type="evidence" value="ECO:0000250"/>
    <property type="project" value="UniProtKB"/>
</dbReference>
<dbReference type="GO" id="GO:0002237">
    <property type="term" value="P:response to molecule of bacterial origin"/>
    <property type="evidence" value="ECO:0000250"/>
    <property type="project" value="UniProtKB"/>
</dbReference>
<dbReference type="FunFam" id="1.20.1250.10:FF:000011">
    <property type="entry name" value="Interleukin-10"/>
    <property type="match status" value="1"/>
</dbReference>
<dbReference type="Gene3D" id="1.20.1250.10">
    <property type="match status" value="1"/>
</dbReference>
<dbReference type="InterPro" id="IPR009079">
    <property type="entry name" value="4_helix_cytokine-like_core"/>
</dbReference>
<dbReference type="InterPro" id="IPR000098">
    <property type="entry name" value="IL-10"/>
</dbReference>
<dbReference type="InterPro" id="IPR020443">
    <property type="entry name" value="IL-10/19/20/24/26"/>
</dbReference>
<dbReference type="InterPro" id="IPR020423">
    <property type="entry name" value="IL-10_CS"/>
</dbReference>
<dbReference type="PANTHER" id="PTHR48482:SF5">
    <property type="entry name" value="INTERLEUKIN-10"/>
    <property type="match status" value="1"/>
</dbReference>
<dbReference type="PANTHER" id="PTHR48482">
    <property type="entry name" value="INTERLEUKIN-19-RELATED"/>
    <property type="match status" value="1"/>
</dbReference>
<dbReference type="Pfam" id="PF00726">
    <property type="entry name" value="IL10"/>
    <property type="match status" value="1"/>
</dbReference>
<dbReference type="PRINTS" id="PR01294">
    <property type="entry name" value="INTRLEUKIN10"/>
</dbReference>
<dbReference type="SMART" id="SM00188">
    <property type="entry name" value="IL10"/>
    <property type="match status" value="1"/>
</dbReference>
<dbReference type="SUPFAM" id="SSF47266">
    <property type="entry name" value="4-helical cytokines"/>
    <property type="match status" value="1"/>
</dbReference>
<dbReference type="PROSITE" id="PS00520">
    <property type="entry name" value="INTERLEUKIN_10"/>
    <property type="match status" value="1"/>
</dbReference>
<feature type="signal peptide" evidence="4">
    <location>
        <begin position="1"/>
        <end position="18"/>
    </location>
</feature>
<feature type="chain" id="PRO_0000015363" description="Interleukin-10">
    <location>
        <begin position="19"/>
        <end position="178"/>
    </location>
</feature>
<feature type="glycosylation site" description="N-linked (GlcNAc...) asparagine" evidence="4">
    <location>
        <position position="134"/>
    </location>
</feature>
<feature type="disulfide bond" evidence="1">
    <location>
        <begin position="30"/>
        <end position="126"/>
    </location>
</feature>
<feature type="disulfide bond" evidence="1">
    <location>
        <begin position="80"/>
        <end position="132"/>
    </location>
</feature>
<name>IL10_MACMU</name>
<organism>
    <name type="scientific">Macaca mulatta</name>
    <name type="common">Rhesus macaque</name>
    <dbReference type="NCBI Taxonomy" id="9544"/>
    <lineage>
        <taxon>Eukaryota</taxon>
        <taxon>Metazoa</taxon>
        <taxon>Chordata</taxon>
        <taxon>Craniata</taxon>
        <taxon>Vertebrata</taxon>
        <taxon>Euteleostomi</taxon>
        <taxon>Mammalia</taxon>
        <taxon>Eutheria</taxon>
        <taxon>Euarchontoglires</taxon>
        <taxon>Primates</taxon>
        <taxon>Haplorrhini</taxon>
        <taxon>Catarrhini</taxon>
        <taxon>Cercopithecidae</taxon>
        <taxon>Cercopithecinae</taxon>
        <taxon>Macaca</taxon>
    </lineage>
</organism>